<comment type="function">
    <text evidence="1">This is one of the proteins that binds to the 5S RNA in the ribosome where it forms part of the central protuberance.</text>
</comment>
<comment type="subunit">
    <text evidence="1">Part of the 50S ribosomal subunit; part of the 5S rRNA/L5/L18/L25 subcomplex. Contacts the 5S rRNA. Binds to the 5S rRNA independently of L5 and L18.</text>
</comment>
<comment type="similarity">
    <text evidence="1">Belongs to the bacterial ribosomal protein bL25 family. CTC subfamily.</text>
</comment>
<protein>
    <recommendedName>
        <fullName evidence="1">Large ribosomal subunit protein bL25</fullName>
    </recommendedName>
    <alternativeName>
        <fullName evidence="3">50S ribosomal protein L25</fullName>
    </alternativeName>
    <alternativeName>
        <fullName evidence="1">General stress protein CTC</fullName>
    </alternativeName>
</protein>
<feature type="chain" id="PRO_0000181505" description="Large ribosomal subunit protein bL25">
    <location>
        <begin position="1"/>
        <end position="202"/>
    </location>
</feature>
<feature type="region of interest" description="Disordered" evidence="2">
    <location>
        <begin position="1"/>
        <end position="21"/>
    </location>
</feature>
<name>RL25_AGRFC</name>
<keyword id="KW-1185">Reference proteome</keyword>
<keyword id="KW-0687">Ribonucleoprotein</keyword>
<keyword id="KW-0689">Ribosomal protein</keyword>
<keyword id="KW-0694">RNA-binding</keyword>
<keyword id="KW-0699">rRNA-binding</keyword>
<gene>
    <name evidence="1" type="primary">rplY</name>
    <name evidence="1" type="synonym">ctc</name>
    <name type="ordered locus">Atu2227</name>
    <name type="ORF">AGR_C_4048</name>
</gene>
<proteinExistence type="inferred from homology"/>
<accession>Q8UDA0</accession>
<accession>Q7CXK5</accession>
<evidence type="ECO:0000255" key="1">
    <source>
        <dbReference type="HAMAP-Rule" id="MF_01334"/>
    </source>
</evidence>
<evidence type="ECO:0000256" key="2">
    <source>
        <dbReference type="SAM" id="MobiDB-lite"/>
    </source>
</evidence>
<evidence type="ECO:0000305" key="3"/>
<organism>
    <name type="scientific">Agrobacterium fabrum (strain C58 / ATCC 33970)</name>
    <name type="common">Agrobacterium tumefaciens (strain C58)</name>
    <dbReference type="NCBI Taxonomy" id="176299"/>
    <lineage>
        <taxon>Bacteria</taxon>
        <taxon>Pseudomonadati</taxon>
        <taxon>Pseudomonadota</taxon>
        <taxon>Alphaproteobacteria</taxon>
        <taxon>Hyphomicrobiales</taxon>
        <taxon>Rhizobiaceae</taxon>
        <taxon>Rhizobium/Agrobacterium group</taxon>
        <taxon>Agrobacterium</taxon>
        <taxon>Agrobacterium tumefaciens complex</taxon>
    </lineage>
</organism>
<sequence length="202" mass="22114">MSKESYELKAEARERVGKGSSRELRRNGLIPAVIYGDKQAPISIALSTNEVTKRIHAGGFMTTVGTIDVDGKKIKVLPKDYQLDPVRDFTMHVDFLRVSGNTLVNVEIPVHFENEEKSDIKIGGVLNIVRHTVEFHCPANDIPEAITVDLSGLKIGDSVHISNVKLPKNITPVIADRDFTIATIVAPAAGVEEETTEEASEE</sequence>
<dbReference type="EMBL" id="AE007869">
    <property type="protein sequence ID" value="AAK87969.1"/>
    <property type="molecule type" value="Genomic_DNA"/>
</dbReference>
<dbReference type="PIR" id="AB2850">
    <property type="entry name" value="AB2850"/>
</dbReference>
<dbReference type="PIR" id="H97626">
    <property type="entry name" value="H97626"/>
</dbReference>
<dbReference type="RefSeq" id="NP_355184.1">
    <property type="nucleotide sequence ID" value="NC_003062.2"/>
</dbReference>
<dbReference type="RefSeq" id="WP_006311165.1">
    <property type="nucleotide sequence ID" value="NC_003062.2"/>
</dbReference>
<dbReference type="SMR" id="Q8UDA0"/>
<dbReference type="STRING" id="176299.Atu2227"/>
<dbReference type="EnsemblBacteria" id="AAK87969">
    <property type="protein sequence ID" value="AAK87969"/>
    <property type="gene ID" value="Atu2227"/>
</dbReference>
<dbReference type="GeneID" id="1134265"/>
<dbReference type="KEGG" id="atu:Atu2227"/>
<dbReference type="PATRIC" id="fig|176299.10.peg.2236"/>
<dbReference type="eggNOG" id="COG1825">
    <property type="taxonomic scope" value="Bacteria"/>
</dbReference>
<dbReference type="HOGENOM" id="CLU_075939_0_0_5"/>
<dbReference type="OrthoDB" id="9806411at2"/>
<dbReference type="PhylomeDB" id="Q8UDA0"/>
<dbReference type="BioCyc" id="AGRO:ATU2227-MONOMER"/>
<dbReference type="Proteomes" id="UP000000813">
    <property type="component" value="Chromosome circular"/>
</dbReference>
<dbReference type="GO" id="GO:0022625">
    <property type="term" value="C:cytosolic large ribosomal subunit"/>
    <property type="evidence" value="ECO:0007669"/>
    <property type="project" value="TreeGrafter"/>
</dbReference>
<dbReference type="GO" id="GO:0008097">
    <property type="term" value="F:5S rRNA binding"/>
    <property type="evidence" value="ECO:0007669"/>
    <property type="project" value="InterPro"/>
</dbReference>
<dbReference type="GO" id="GO:0003735">
    <property type="term" value="F:structural constituent of ribosome"/>
    <property type="evidence" value="ECO:0007669"/>
    <property type="project" value="InterPro"/>
</dbReference>
<dbReference type="GO" id="GO:0006412">
    <property type="term" value="P:translation"/>
    <property type="evidence" value="ECO:0007669"/>
    <property type="project" value="UniProtKB-UniRule"/>
</dbReference>
<dbReference type="CDD" id="cd00495">
    <property type="entry name" value="Ribosomal_L25_TL5_CTC"/>
    <property type="match status" value="1"/>
</dbReference>
<dbReference type="Gene3D" id="2.170.120.20">
    <property type="entry name" value="Ribosomal protein L25, beta domain"/>
    <property type="match status" value="1"/>
</dbReference>
<dbReference type="Gene3D" id="2.40.240.10">
    <property type="entry name" value="Ribosomal Protein L25, Chain P"/>
    <property type="match status" value="1"/>
</dbReference>
<dbReference type="HAMAP" id="MF_01334">
    <property type="entry name" value="Ribosomal_bL25_CTC"/>
    <property type="match status" value="1"/>
</dbReference>
<dbReference type="InterPro" id="IPR020056">
    <property type="entry name" value="Rbsml_bL25/Gln-tRNA_synth_N"/>
</dbReference>
<dbReference type="InterPro" id="IPR011035">
    <property type="entry name" value="Ribosomal_bL25/Gln-tRNA_synth"/>
</dbReference>
<dbReference type="InterPro" id="IPR020057">
    <property type="entry name" value="Ribosomal_bL25_b-dom"/>
</dbReference>
<dbReference type="InterPro" id="IPR037121">
    <property type="entry name" value="Ribosomal_bL25_C"/>
</dbReference>
<dbReference type="InterPro" id="IPR001021">
    <property type="entry name" value="Ribosomal_bL25_long"/>
</dbReference>
<dbReference type="InterPro" id="IPR029751">
    <property type="entry name" value="Ribosomal_L25_dom"/>
</dbReference>
<dbReference type="InterPro" id="IPR020930">
    <property type="entry name" value="Ribosomal_uL5_bac-type"/>
</dbReference>
<dbReference type="NCBIfam" id="TIGR00731">
    <property type="entry name" value="bL25_bact_ctc"/>
    <property type="match status" value="1"/>
</dbReference>
<dbReference type="NCBIfam" id="NF004128">
    <property type="entry name" value="PRK05618.1-2"/>
    <property type="match status" value="1"/>
</dbReference>
<dbReference type="NCBIfam" id="NF004612">
    <property type="entry name" value="PRK05943.1"/>
    <property type="match status" value="1"/>
</dbReference>
<dbReference type="PANTHER" id="PTHR33284">
    <property type="entry name" value="RIBOSOMAL PROTEIN L25/GLN-TRNA SYNTHETASE, ANTI-CODON-BINDING DOMAIN-CONTAINING PROTEIN"/>
    <property type="match status" value="1"/>
</dbReference>
<dbReference type="PANTHER" id="PTHR33284:SF1">
    <property type="entry name" value="RIBOSOMAL PROTEIN L25_GLN-TRNA SYNTHETASE, ANTI-CODON-BINDING DOMAIN-CONTAINING PROTEIN"/>
    <property type="match status" value="1"/>
</dbReference>
<dbReference type="Pfam" id="PF01386">
    <property type="entry name" value="Ribosomal_L25p"/>
    <property type="match status" value="1"/>
</dbReference>
<dbReference type="Pfam" id="PF14693">
    <property type="entry name" value="Ribosomal_TL5_C"/>
    <property type="match status" value="1"/>
</dbReference>
<dbReference type="SUPFAM" id="SSF50715">
    <property type="entry name" value="Ribosomal protein L25-like"/>
    <property type="match status" value="1"/>
</dbReference>
<reference key="1">
    <citation type="journal article" date="2001" name="Science">
        <title>The genome of the natural genetic engineer Agrobacterium tumefaciens C58.</title>
        <authorList>
            <person name="Wood D.W."/>
            <person name="Setubal J.C."/>
            <person name="Kaul R."/>
            <person name="Monks D.E."/>
            <person name="Kitajima J.P."/>
            <person name="Okura V.K."/>
            <person name="Zhou Y."/>
            <person name="Chen L."/>
            <person name="Wood G.E."/>
            <person name="Almeida N.F. Jr."/>
            <person name="Woo L."/>
            <person name="Chen Y."/>
            <person name="Paulsen I.T."/>
            <person name="Eisen J.A."/>
            <person name="Karp P.D."/>
            <person name="Bovee D. Sr."/>
            <person name="Chapman P."/>
            <person name="Clendenning J."/>
            <person name="Deatherage G."/>
            <person name="Gillet W."/>
            <person name="Grant C."/>
            <person name="Kutyavin T."/>
            <person name="Levy R."/>
            <person name="Li M.-J."/>
            <person name="McClelland E."/>
            <person name="Palmieri A."/>
            <person name="Raymond C."/>
            <person name="Rouse G."/>
            <person name="Saenphimmachak C."/>
            <person name="Wu Z."/>
            <person name="Romero P."/>
            <person name="Gordon D."/>
            <person name="Zhang S."/>
            <person name="Yoo H."/>
            <person name="Tao Y."/>
            <person name="Biddle P."/>
            <person name="Jung M."/>
            <person name="Krespan W."/>
            <person name="Perry M."/>
            <person name="Gordon-Kamm B."/>
            <person name="Liao L."/>
            <person name="Kim S."/>
            <person name="Hendrick C."/>
            <person name="Zhao Z.-Y."/>
            <person name="Dolan M."/>
            <person name="Chumley F."/>
            <person name="Tingey S.V."/>
            <person name="Tomb J.-F."/>
            <person name="Gordon M.P."/>
            <person name="Olson M.V."/>
            <person name="Nester E.W."/>
        </authorList>
    </citation>
    <scope>NUCLEOTIDE SEQUENCE [LARGE SCALE GENOMIC DNA]</scope>
    <source>
        <strain>C58 / ATCC 33970</strain>
    </source>
</reference>
<reference key="2">
    <citation type="journal article" date="2001" name="Science">
        <title>Genome sequence of the plant pathogen and biotechnology agent Agrobacterium tumefaciens C58.</title>
        <authorList>
            <person name="Goodner B."/>
            <person name="Hinkle G."/>
            <person name="Gattung S."/>
            <person name="Miller N."/>
            <person name="Blanchard M."/>
            <person name="Qurollo B."/>
            <person name="Goldman B.S."/>
            <person name="Cao Y."/>
            <person name="Askenazi M."/>
            <person name="Halling C."/>
            <person name="Mullin L."/>
            <person name="Houmiel K."/>
            <person name="Gordon J."/>
            <person name="Vaudin M."/>
            <person name="Iartchouk O."/>
            <person name="Epp A."/>
            <person name="Liu F."/>
            <person name="Wollam C."/>
            <person name="Allinger M."/>
            <person name="Doughty D."/>
            <person name="Scott C."/>
            <person name="Lappas C."/>
            <person name="Markelz B."/>
            <person name="Flanagan C."/>
            <person name="Crowell C."/>
            <person name="Gurson J."/>
            <person name="Lomo C."/>
            <person name="Sear C."/>
            <person name="Strub G."/>
            <person name="Cielo C."/>
            <person name="Slater S."/>
        </authorList>
    </citation>
    <scope>NUCLEOTIDE SEQUENCE [LARGE SCALE GENOMIC DNA]</scope>
    <source>
        <strain>C58 / ATCC 33970</strain>
    </source>
</reference>